<gene>
    <name evidence="1" type="primary">NS</name>
</gene>
<protein>
    <recommendedName>
        <fullName evidence="1">Nuclear export protein</fullName>
        <shortName evidence="1">NEP</shortName>
    </recommendedName>
    <alternativeName>
        <fullName evidence="1">Non-structural protein 2</fullName>
        <shortName evidence="1">NS2</shortName>
    </alternativeName>
</protein>
<sequence length="121" mass="14287">MDSNTITSFQDILQRMSKMQLESSSVDLNGMITQFERLKIYRDSLGESVMRMGDLHSLQSRNATWREELSQKFEEIRWLIAECRNILTKTENSFEQITFLQALQLLLEVESEIRTFSFQLI</sequence>
<feature type="chain" id="PRO_0000079008" description="Nuclear export protein">
    <location>
        <begin position="1"/>
        <end position="121"/>
    </location>
</feature>
<feature type="short sequence motif" description="Nuclear export signal" evidence="1">
    <location>
        <begin position="12"/>
        <end position="21"/>
    </location>
</feature>
<feature type="short sequence motif" description="Nuclear export signal" evidence="1">
    <location>
        <begin position="85"/>
        <end position="94"/>
    </location>
</feature>
<feature type="sequence conflict" description="In Ref. 1; AAA43550." ref="1">
    <original>T</original>
    <variation>S</variation>
    <location>
        <position position="88"/>
    </location>
</feature>
<feature type="sequence conflict" description="In Ref. 1; AAA43550." ref="1">
    <original>N</original>
    <variation>K</variation>
    <location>
        <position position="92"/>
    </location>
</feature>
<feature type="sequence conflict" description="In Ref. 1; AAA43550." ref="1">
    <original>F</original>
    <variation>L</variation>
    <location>
        <position position="99"/>
    </location>
</feature>
<accession>P08277</accession>
<accession>Q6LC08</accession>
<dbReference type="EMBL" id="M16623">
    <property type="protein sequence ID" value="AAA43550.1"/>
    <property type="molecule type" value="Genomic_RNA"/>
</dbReference>
<dbReference type="EMBL" id="U96740">
    <property type="protein sequence ID" value="AAB93940.1"/>
    <property type="molecule type" value="Genomic_RNA"/>
</dbReference>
<dbReference type="EMBL" id="DQ870898">
    <property type="protein sequence ID" value="ABH04391.1"/>
    <property type="molecule type" value="Genomic_RNA"/>
</dbReference>
<dbReference type="SMR" id="P08277"/>
<dbReference type="GO" id="GO:0042025">
    <property type="term" value="C:host cell nucleus"/>
    <property type="evidence" value="ECO:0007669"/>
    <property type="project" value="UniProtKB-SubCell"/>
</dbReference>
<dbReference type="GO" id="GO:0044423">
    <property type="term" value="C:virion component"/>
    <property type="evidence" value="ECO:0007669"/>
    <property type="project" value="UniProtKB-UniRule"/>
</dbReference>
<dbReference type="GO" id="GO:0039675">
    <property type="term" value="P:exit of virus from host cell nucleus through nuclear pore"/>
    <property type="evidence" value="ECO:0007669"/>
    <property type="project" value="UniProtKB-UniRule"/>
</dbReference>
<dbReference type="Gene3D" id="1.10.287.230">
    <property type="match status" value="1"/>
</dbReference>
<dbReference type="HAMAP" id="MF_04067">
    <property type="entry name" value="INFV_NEP"/>
    <property type="match status" value="1"/>
</dbReference>
<dbReference type="InterPro" id="IPR000968">
    <property type="entry name" value="Flu_NS2"/>
</dbReference>
<dbReference type="Pfam" id="PF00601">
    <property type="entry name" value="Flu_NS2"/>
    <property type="match status" value="1"/>
</dbReference>
<dbReference type="SUPFAM" id="SSF101156">
    <property type="entry name" value="Nonstructural protein ns2, Nep, M1-binding domain"/>
    <property type="match status" value="1"/>
</dbReference>
<evidence type="ECO:0000255" key="1">
    <source>
        <dbReference type="HAMAP-Rule" id="MF_04067"/>
    </source>
</evidence>
<organism>
    <name type="scientific">Influenza A virus (strain A/Turkey/Oregon/1971 H7N3)</name>
    <dbReference type="NCBI Taxonomy" id="385636"/>
    <lineage>
        <taxon>Viruses</taxon>
        <taxon>Riboviria</taxon>
        <taxon>Orthornavirae</taxon>
        <taxon>Negarnaviricota</taxon>
        <taxon>Polyploviricotina</taxon>
        <taxon>Insthoviricetes</taxon>
        <taxon>Articulavirales</taxon>
        <taxon>Orthomyxoviridae</taxon>
        <taxon>Alphainfluenzavirus</taxon>
        <taxon>Alphainfluenzavirus influenzae</taxon>
        <taxon>Influenza A virus</taxon>
    </lineage>
</organism>
<organismHost>
    <name type="scientific">Aves</name>
    <dbReference type="NCBI Taxonomy" id="8782"/>
</organismHost>
<reference key="1">
    <citation type="journal article" date="1987" name="Virology">
        <title>Infectious influenza A and B virus variants with long carboxyl terminal deletions in the NS1 polypeptides.</title>
        <authorList>
            <person name="Norton G.P."/>
            <person name="Tanaka T."/>
            <person name="Tobita K."/>
            <person name="Nakada S."/>
            <person name="Buonagurio D.A."/>
            <person name="Greenspan D."/>
            <person name="Krystal M."/>
            <person name="Palese P."/>
        </authorList>
    </citation>
    <scope>NUCLEOTIDE SEQUENCE [GENOMIC RNA]</scope>
</reference>
<reference key="2">
    <citation type="journal article" date="1998" name="Virus Res.">
        <title>Multiple alignment comparison of the non-structural genes of influenza A viruses.</title>
        <authorList>
            <person name="Suarez D.L."/>
            <person name="Perdue M.L."/>
        </authorList>
    </citation>
    <scope>NUCLEOTIDE SEQUENCE [GENOMIC RNA]</scope>
</reference>
<reference key="3">
    <citation type="journal article" date="2007" name="J. Virol.">
        <title>Amelioration of influenza virus pathogenesis in chickens attributed to the enhanced interferon-inducing capacity of a virus with a truncated NS1 gene.</title>
        <authorList>
            <person name="Cauthen A.N."/>
            <person name="Swayne D.E."/>
            <person name="Sekellick M.J."/>
            <person name="Marcus P.I."/>
            <person name="Suarez D.L."/>
        </authorList>
    </citation>
    <scope>NUCLEOTIDE SEQUENCE [GENOMIC RNA]</scope>
</reference>
<name>NEP_I71A2</name>
<proteinExistence type="inferred from homology"/>
<comment type="function">
    <text evidence="1">Mediates the nuclear export of encapsidated genomic RNAs (ribonucleoproteins, RNPs). Acts as an adapter between viral RNPs complexes and the nuclear export machinery of the cell. Possesses no intrinsic RNA-binding activity, but includes a C-terminal M1-binding domain. This domain is believed to allow recognition of RNPs bound to the protein M1. Since protein M1 is not available in large quantities before late stages of infection, such an indirect recognition mechanism probably ensures that genomic RNPs are not exported from the host nucleus until sufficient quantities of viral mRNA and progeny genomic RNA have been synthesized. Furthermore, the RNPs enter the host cytoplasm only when associated with the M1 protein that is necessary to guide them to the plasma membrane. May down-regulate viral RNA synthesis when overproduced.</text>
</comment>
<comment type="subunit">
    <text evidence="1">Interacts with protein M1. May interact with host nucleoporin RAB/HRB and exportin XPO1/CRM1.</text>
</comment>
<comment type="subcellular location">
    <subcellularLocation>
        <location evidence="1">Virion</location>
    </subcellularLocation>
    <subcellularLocation>
        <location evidence="1">Host nucleus</location>
    </subcellularLocation>
</comment>
<comment type="alternative products">
    <event type="alternative splicing"/>
    <isoform>
        <id>P08277-1</id>
        <name>NEP</name>
        <name>NS2</name>
        <sequence type="displayed"/>
    </isoform>
    <isoform>
        <id>P08276-1</id>
        <name>NS1</name>
        <sequence type="external"/>
    </isoform>
</comment>
<comment type="miscellaneous">
    <text>Average number present in a viral particle is estimated to be 130-200 molecules.</text>
</comment>
<comment type="similarity">
    <text evidence="1">Belongs to the influenza viruses NEP family.</text>
</comment>
<keyword id="KW-0025">Alternative splicing</keyword>
<keyword id="KW-1048">Host nucleus</keyword>
<keyword id="KW-0945">Host-virus interaction</keyword>
<keyword id="KW-0813">Transport</keyword>
<keyword id="KW-0946">Virion</keyword>